<name>RPC2_BPPH8</name>
<organism>
    <name type="scientific">Enterobacteria phage phi80</name>
    <name type="common">Bacteriophage phi-80</name>
    <dbReference type="NCBI Taxonomy" id="10713"/>
    <lineage>
        <taxon>Viruses</taxon>
        <taxon>Duplodnaviria</taxon>
        <taxon>Heunggongvirae</taxon>
        <taxon>Uroviricota</taxon>
        <taxon>Caudoviricetes</taxon>
    </lineage>
</organism>
<gene>
    <name type="primary">CII</name>
</gene>
<sequence>MSALIINEYREQGGTAISFPEDISRARQKLFRFLDNRFDSDQYRENVRELTPAIMAVLPVEFRTRLAPQNDTMSLIASAMKECSEAKQAVLLNAPEHQKMKEVSEGIASLFRLMPEQVGPLMTMVTSMLGVI</sequence>
<reference key="1">
    <citation type="journal article" date="1988" name="J. Mol. Biol.">
        <title>Organization of the early region of bacteriophage phi 80. Genes and proteins.</title>
        <authorList>
            <person name="Ogawa T."/>
            <person name="Ogawa H."/>
            <person name="Tomizawa J."/>
        </authorList>
    </citation>
    <scope>NUCLEOTIDE SEQUENCE [GENOMIC DNA]</scope>
</reference>
<feature type="chain" id="PRO_0000077586" description="Regulatory protein CII">
    <location>
        <begin position="1"/>
        <end position="132"/>
    </location>
</feature>
<accession>P14820</accession>
<proteinExistence type="predicted"/>
<keyword id="KW-0244">Early protein</keyword>
<comment type="function">
    <text>May be involved in activation of synthesis of the CI protein.</text>
</comment>
<organismHost>
    <name type="scientific">Escherichia coli</name>
    <dbReference type="NCBI Taxonomy" id="562"/>
</organismHost>
<protein>
    <recommendedName>
        <fullName>Regulatory protein CII</fullName>
    </recommendedName>
</protein>
<dbReference type="EMBL" id="X13065">
    <property type="protein sequence ID" value="CAA31473.1"/>
    <property type="molecule type" value="Genomic_DNA"/>
</dbReference>
<dbReference type="PIR" id="S04830">
    <property type="entry name" value="S04830"/>
</dbReference>
<dbReference type="SMR" id="P14820"/>
<dbReference type="Gene3D" id="1.10.3600.10">
    <property type="entry name" value="Putative bacterial toxin ydaT"/>
    <property type="match status" value="1"/>
</dbReference>
<dbReference type="InterPro" id="IPR009364">
    <property type="entry name" value="YdaT_toxin"/>
</dbReference>
<dbReference type="InterPro" id="IPR037042">
    <property type="entry name" value="YdaT_toxin_sf"/>
</dbReference>
<dbReference type="Pfam" id="PF06254">
    <property type="entry name" value="YdaT_toxin"/>
    <property type="match status" value="1"/>
</dbReference>